<dbReference type="EC" id="1.1.1.94" evidence="1"/>
<dbReference type="EMBL" id="BX936398">
    <property type="protein sequence ID" value="CAH19304.1"/>
    <property type="molecule type" value="Genomic_DNA"/>
</dbReference>
<dbReference type="RefSeq" id="WP_002208975.1">
    <property type="nucleotide sequence ID" value="NZ_CP009712.1"/>
</dbReference>
<dbReference type="SMR" id="Q66GB8"/>
<dbReference type="GeneID" id="57974523"/>
<dbReference type="KEGG" id="ypo:BZ17_2531"/>
<dbReference type="KEGG" id="yps:YPTB0064"/>
<dbReference type="PATRIC" id="fig|273123.14.peg.2656"/>
<dbReference type="UniPathway" id="UPA00940"/>
<dbReference type="Proteomes" id="UP000001011">
    <property type="component" value="Chromosome"/>
</dbReference>
<dbReference type="GO" id="GO:0005829">
    <property type="term" value="C:cytosol"/>
    <property type="evidence" value="ECO:0007669"/>
    <property type="project" value="TreeGrafter"/>
</dbReference>
<dbReference type="GO" id="GO:0047952">
    <property type="term" value="F:glycerol-3-phosphate dehydrogenase [NAD(P)+] activity"/>
    <property type="evidence" value="ECO:0007669"/>
    <property type="project" value="UniProtKB-UniRule"/>
</dbReference>
<dbReference type="GO" id="GO:0051287">
    <property type="term" value="F:NAD binding"/>
    <property type="evidence" value="ECO:0007669"/>
    <property type="project" value="InterPro"/>
</dbReference>
<dbReference type="GO" id="GO:0005975">
    <property type="term" value="P:carbohydrate metabolic process"/>
    <property type="evidence" value="ECO:0007669"/>
    <property type="project" value="InterPro"/>
</dbReference>
<dbReference type="GO" id="GO:0046167">
    <property type="term" value="P:glycerol-3-phosphate biosynthetic process"/>
    <property type="evidence" value="ECO:0007669"/>
    <property type="project" value="UniProtKB-UniRule"/>
</dbReference>
<dbReference type="GO" id="GO:0046168">
    <property type="term" value="P:glycerol-3-phosphate catabolic process"/>
    <property type="evidence" value="ECO:0007669"/>
    <property type="project" value="InterPro"/>
</dbReference>
<dbReference type="GO" id="GO:0046474">
    <property type="term" value="P:glycerophospholipid biosynthetic process"/>
    <property type="evidence" value="ECO:0007669"/>
    <property type="project" value="TreeGrafter"/>
</dbReference>
<dbReference type="FunFam" id="1.10.1040.10:FF:000001">
    <property type="entry name" value="Glycerol-3-phosphate dehydrogenase [NAD(P)+]"/>
    <property type="match status" value="1"/>
</dbReference>
<dbReference type="FunFam" id="3.40.50.720:FF:000019">
    <property type="entry name" value="Glycerol-3-phosphate dehydrogenase [NAD(P)+]"/>
    <property type="match status" value="1"/>
</dbReference>
<dbReference type="Gene3D" id="1.10.1040.10">
    <property type="entry name" value="N-(1-d-carboxylethyl)-l-norvaline Dehydrogenase, domain 2"/>
    <property type="match status" value="1"/>
</dbReference>
<dbReference type="Gene3D" id="3.40.50.720">
    <property type="entry name" value="NAD(P)-binding Rossmann-like Domain"/>
    <property type="match status" value="1"/>
</dbReference>
<dbReference type="HAMAP" id="MF_00394">
    <property type="entry name" value="NAD_Glyc3P_dehydrog"/>
    <property type="match status" value="1"/>
</dbReference>
<dbReference type="InterPro" id="IPR008927">
    <property type="entry name" value="6-PGluconate_DH-like_C_sf"/>
</dbReference>
<dbReference type="InterPro" id="IPR013328">
    <property type="entry name" value="6PGD_dom2"/>
</dbReference>
<dbReference type="InterPro" id="IPR006168">
    <property type="entry name" value="G3P_DH_NAD-dep"/>
</dbReference>
<dbReference type="InterPro" id="IPR006109">
    <property type="entry name" value="G3P_DH_NAD-dep_C"/>
</dbReference>
<dbReference type="InterPro" id="IPR011128">
    <property type="entry name" value="G3P_DH_NAD-dep_N"/>
</dbReference>
<dbReference type="InterPro" id="IPR036291">
    <property type="entry name" value="NAD(P)-bd_dom_sf"/>
</dbReference>
<dbReference type="NCBIfam" id="NF000939">
    <property type="entry name" value="PRK00094.1-1"/>
    <property type="match status" value="1"/>
</dbReference>
<dbReference type="NCBIfam" id="NF000940">
    <property type="entry name" value="PRK00094.1-2"/>
    <property type="match status" value="1"/>
</dbReference>
<dbReference type="NCBIfam" id="NF000942">
    <property type="entry name" value="PRK00094.1-4"/>
    <property type="match status" value="1"/>
</dbReference>
<dbReference type="PANTHER" id="PTHR11728">
    <property type="entry name" value="GLYCEROL-3-PHOSPHATE DEHYDROGENASE"/>
    <property type="match status" value="1"/>
</dbReference>
<dbReference type="PANTHER" id="PTHR11728:SF1">
    <property type="entry name" value="GLYCEROL-3-PHOSPHATE DEHYDROGENASE [NAD(+)] 2, CHLOROPLASTIC"/>
    <property type="match status" value="1"/>
</dbReference>
<dbReference type="Pfam" id="PF07479">
    <property type="entry name" value="NAD_Gly3P_dh_C"/>
    <property type="match status" value="1"/>
</dbReference>
<dbReference type="Pfam" id="PF01210">
    <property type="entry name" value="NAD_Gly3P_dh_N"/>
    <property type="match status" value="1"/>
</dbReference>
<dbReference type="PIRSF" id="PIRSF000114">
    <property type="entry name" value="Glycerol-3-P_dh"/>
    <property type="match status" value="1"/>
</dbReference>
<dbReference type="PRINTS" id="PR00077">
    <property type="entry name" value="GPDHDRGNASE"/>
</dbReference>
<dbReference type="SUPFAM" id="SSF48179">
    <property type="entry name" value="6-phosphogluconate dehydrogenase C-terminal domain-like"/>
    <property type="match status" value="1"/>
</dbReference>
<dbReference type="SUPFAM" id="SSF51735">
    <property type="entry name" value="NAD(P)-binding Rossmann-fold domains"/>
    <property type="match status" value="1"/>
</dbReference>
<dbReference type="PROSITE" id="PS00957">
    <property type="entry name" value="NAD_G3PDH"/>
    <property type="match status" value="1"/>
</dbReference>
<protein>
    <recommendedName>
        <fullName evidence="1">Glycerol-3-phosphate dehydrogenase [NAD(P)+]</fullName>
        <ecNumber evidence="1">1.1.1.94</ecNumber>
    </recommendedName>
    <alternativeName>
        <fullName evidence="1">NAD(P)(+)-dependent glycerol-3-phosphate dehydrogenase</fullName>
    </alternativeName>
    <alternativeName>
        <fullName evidence="1">NAD(P)H-dependent dihydroxyacetone-phosphate reductase</fullName>
    </alternativeName>
</protein>
<sequence>MNTNPASMAVIGAGSYGTALAITLARNGHQVVLWGHDPKHIQQLQQDRCNRAFLPDAAFPDTLRLETDLACALAASRDVLVVVPSHVFGAVLHQLKPHLRKDARIVWATKGLEAETGRLLQDVAREVLGEAIPLAVISGPTFAKELAAGLPTAIALASTDVQFSEDLQQLLHCGKSFRVYSNPDFIGVQLGGAVKNVIAIGAGMSDGIGFGANARTALITRGLAEMTRLGTALGADPSTFMGMAGLGDLVLTCTDNQSRNRRFGIMLGQGLGVKEAQDNIGQVVEGYRNTKEVLALAQRHGVEMPITEQIYQVLYCHKNAREAALTLLGRTKKDEKIGI</sequence>
<name>GPDA_YERPS</name>
<accession>Q66GB8</accession>
<feature type="chain" id="PRO_0000138066" description="Glycerol-3-phosphate dehydrogenase [NAD(P)+]">
    <location>
        <begin position="1"/>
        <end position="339"/>
    </location>
</feature>
<feature type="active site" description="Proton acceptor" evidence="1">
    <location>
        <position position="195"/>
    </location>
</feature>
<feature type="binding site" evidence="1">
    <location>
        <position position="15"/>
    </location>
    <ligand>
        <name>NADPH</name>
        <dbReference type="ChEBI" id="CHEBI:57783"/>
    </ligand>
</feature>
<feature type="binding site" evidence="1">
    <location>
        <position position="16"/>
    </location>
    <ligand>
        <name>NADPH</name>
        <dbReference type="ChEBI" id="CHEBI:57783"/>
    </ligand>
</feature>
<feature type="binding site" evidence="1">
    <location>
        <position position="36"/>
    </location>
    <ligand>
        <name>NADPH</name>
        <dbReference type="ChEBI" id="CHEBI:57783"/>
    </ligand>
</feature>
<feature type="binding site" evidence="1">
    <location>
        <position position="110"/>
    </location>
    <ligand>
        <name>NADPH</name>
        <dbReference type="ChEBI" id="CHEBI:57783"/>
    </ligand>
</feature>
<feature type="binding site" evidence="1">
    <location>
        <position position="110"/>
    </location>
    <ligand>
        <name>sn-glycerol 3-phosphate</name>
        <dbReference type="ChEBI" id="CHEBI:57597"/>
    </ligand>
</feature>
<feature type="binding site" evidence="1">
    <location>
        <position position="139"/>
    </location>
    <ligand>
        <name>sn-glycerol 3-phosphate</name>
        <dbReference type="ChEBI" id="CHEBI:57597"/>
    </ligand>
</feature>
<feature type="binding site" evidence="1">
    <location>
        <position position="141"/>
    </location>
    <ligand>
        <name>sn-glycerol 3-phosphate</name>
        <dbReference type="ChEBI" id="CHEBI:57597"/>
    </ligand>
</feature>
<feature type="binding site" evidence="1">
    <location>
        <position position="143"/>
    </location>
    <ligand>
        <name>NADPH</name>
        <dbReference type="ChEBI" id="CHEBI:57783"/>
    </ligand>
</feature>
<feature type="binding site" evidence="1">
    <location>
        <position position="195"/>
    </location>
    <ligand>
        <name>sn-glycerol 3-phosphate</name>
        <dbReference type="ChEBI" id="CHEBI:57597"/>
    </ligand>
</feature>
<feature type="binding site" evidence="1">
    <location>
        <position position="248"/>
    </location>
    <ligand>
        <name>sn-glycerol 3-phosphate</name>
        <dbReference type="ChEBI" id="CHEBI:57597"/>
    </ligand>
</feature>
<feature type="binding site" evidence="1">
    <location>
        <position position="258"/>
    </location>
    <ligand>
        <name>sn-glycerol 3-phosphate</name>
        <dbReference type="ChEBI" id="CHEBI:57597"/>
    </ligand>
</feature>
<feature type="binding site" evidence="1">
    <location>
        <position position="259"/>
    </location>
    <ligand>
        <name>NADPH</name>
        <dbReference type="ChEBI" id="CHEBI:57783"/>
    </ligand>
</feature>
<feature type="binding site" evidence="1">
    <location>
        <position position="259"/>
    </location>
    <ligand>
        <name>sn-glycerol 3-phosphate</name>
        <dbReference type="ChEBI" id="CHEBI:57597"/>
    </ligand>
</feature>
<feature type="binding site" evidence="1">
    <location>
        <position position="260"/>
    </location>
    <ligand>
        <name>sn-glycerol 3-phosphate</name>
        <dbReference type="ChEBI" id="CHEBI:57597"/>
    </ligand>
</feature>
<feature type="binding site" evidence="1">
    <location>
        <position position="283"/>
    </location>
    <ligand>
        <name>NADPH</name>
        <dbReference type="ChEBI" id="CHEBI:57783"/>
    </ligand>
</feature>
<feature type="binding site" evidence="1">
    <location>
        <position position="285"/>
    </location>
    <ligand>
        <name>NADPH</name>
        <dbReference type="ChEBI" id="CHEBI:57783"/>
    </ligand>
</feature>
<evidence type="ECO:0000255" key="1">
    <source>
        <dbReference type="HAMAP-Rule" id="MF_00394"/>
    </source>
</evidence>
<gene>
    <name evidence="1" type="primary">gpsA</name>
    <name type="ordered locus">YPTB0064</name>
</gene>
<comment type="function">
    <text evidence="1">Catalyzes the reduction of the glycolytic intermediate dihydroxyacetone phosphate (DHAP) to sn-glycerol 3-phosphate (G3P), the key precursor for phospholipid synthesis.</text>
</comment>
<comment type="catalytic activity">
    <reaction evidence="1">
        <text>sn-glycerol 3-phosphate + NAD(+) = dihydroxyacetone phosphate + NADH + H(+)</text>
        <dbReference type="Rhea" id="RHEA:11092"/>
        <dbReference type="ChEBI" id="CHEBI:15378"/>
        <dbReference type="ChEBI" id="CHEBI:57540"/>
        <dbReference type="ChEBI" id="CHEBI:57597"/>
        <dbReference type="ChEBI" id="CHEBI:57642"/>
        <dbReference type="ChEBI" id="CHEBI:57945"/>
        <dbReference type="EC" id="1.1.1.94"/>
    </reaction>
    <physiologicalReaction direction="right-to-left" evidence="1">
        <dbReference type="Rhea" id="RHEA:11094"/>
    </physiologicalReaction>
</comment>
<comment type="catalytic activity">
    <reaction evidence="1">
        <text>sn-glycerol 3-phosphate + NADP(+) = dihydroxyacetone phosphate + NADPH + H(+)</text>
        <dbReference type="Rhea" id="RHEA:11096"/>
        <dbReference type="ChEBI" id="CHEBI:15378"/>
        <dbReference type="ChEBI" id="CHEBI:57597"/>
        <dbReference type="ChEBI" id="CHEBI:57642"/>
        <dbReference type="ChEBI" id="CHEBI:57783"/>
        <dbReference type="ChEBI" id="CHEBI:58349"/>
        <dbReference type="EC" id="1.1.1.94"/>
    </reaction>
    <physiologicalReaction direction="right-to-left" evidence="1">
        <dbReference type="Rhea" id="RHEA:11098"/>
    </physiologicalReaction>
</comment>
<comment type="pathway">
    <text evidence="1">Membrane lipid metabolism; glycerophospholipid metabolism.</text>
</comment>
<comment type="subcellular location">
    <subcellularLocation>
        <location evidence="1">Cytoplasm</location>
    </subcellularLocation>
</comment>
<comment type="similarity">
    <text evidence="1">Belongs to the NAD-dependent glycerol-3-phosphate dehydrogenase family.</text>
</comment>
<organism>
    <name type="scientific">Yersinia pseudotuberculosis serotype I (strain IP32953)</name>
    <dbReference type="NCBI Taxonomy" id="273123"/>
    <lineage>
        <taxon>Bacteria</taxon>
        <taxon>Pseudomonadati</taxon>
        <taxon>Pseudomonadota</taxon>
        <taxon>Gammaproteobacteria</taxon>
        <taxon>Enterobacterales</taxon>
        <taxon>Yersiniaceae</taxon>
        <taxon>Yersinia</taxon>
    </lineage>
</organism>
<proteinExistence type="inferred from homology"/>
<reference key="1">
    <citation type="journal article" date="2004" name="Proc. Natl. Acad. Sci. U.S.A.">
        <title>Insights into the evolution of Yersinia pestis through whole-genome comparison with Yersinia pseudotuberculosis.</title>
        <authorList>
            <person name="Chain P.S.G."/>
            <person name="Carniel E."/>
            <person name="Larimer F.W."/>
            <person name="Lamerdin J."/>
            <person name="Stoutland P.O."/>
            <person name="Regala W.M."/>
            <person name="Georgescu A.M."/>
            <person name="Vergez L.M."/>
            <person name="Land M.L."/>
            <person name="Motin V.L."/>
            <person name="Brubaker R.R."/>
            <person name="Fowler J."/>
            <person name="Hinnebusch J."/>
            <person name="Marceau M."/>
            <person name="Medigue C."/>
            <person name="Simonet M."/>
            <person name="Chenal-Francisque V."/>
            <person name="Souza B."/>
            <person name="Dacheux D."/>
            <person name="Elliott J.M."/>
            <person name="Derbise A."/>
            <person name="Hauser L.J."/>
            <person name="Garcia E."/>
        </authorList>
    </citation>
    <scope>NUCLEOTIDE SEQUENCE [LARGE SCALE GENOMIC DNA]</scope>
    <source>
        <strain>IP32953</strain>
    </source>
</reference>
<keyword id="KW-0963">Cytoplasm</keyword>
<keyword id="KW-0444">Lipid biosynthesis</keyword>
<keyword id="KW-0443">Lipid metabolism</keyword>
<keyword id="KW-0520">NAD</keyword>
<keyword id="KW-0521">NADP</keyword>
<keyword id="KW-0547">Nucleotide-binding</keyword>
<keyword id="KW-0560">Oxidoreductase</keyword>
<keyword id="KW-0594">Phospholipid biosynthesis</keyword>
<keyword id="KW-1208">Phospholipid metabolism</keyword>